<dbReference type="EMBL" id="BA000018">
    <property type="protein sequence ID" value="BAB41496.1"/>
    <property type="molecule type" value="Genomic_DNA"/>
</dbReference>
<dbReference type="PIR" id="E89792">
    <property type="entry name" value="E89792"/>
</dbReference>
<dbReference type="RefSeq" id="WP_000728958.1">
    <property type="nucleotide sequence ID" value="NC_002745.2"/>
</dbReference>
<dbReference type="SMR" id="Q7A7S3"/>
<dbReference type="EnsemblBacteria" id="BAB41496">
    <property type="protein sequence ID" value="BAB41496"/>
    <property type="gene ID" value="BAB41496"/>
</dbReference>
<dbReference type="KEGG" id="sau:SA0272"/>
<dbReference type="HOGENOM" id="CLU_015018_0_0_9"/>
<dbReference type="GO" id="GO:0005886">
    <property type="term" value="C:plasma membrane"/>
    <property type="evidence" value="ECO:0007669"/>
    <property type="project" value="UniProtKB-SubCell"/>
</dbReference>
<dbReference type="Gene3D" id="3.40.1710.10">
    <property type="entry name" value="abc type-2 transporter like domain"/>
    <property type="match status" value="1"/>
</dbReference>
<dbReference type="InterPro" id="IPR051328">
    <property type="entry name" value="T7SS_ABC-Transporter"/>
</dbReference>
<dbReference type="InterPro" id="IPR023838">
    <property type="entry name" value="T7SS_EsaA"/>
</dbReference>
<dbReference type="NCBIfam" id="TIGR03929">
    <property type="entry name" value="T7_esaA_Nterm"/>
    <property type="match status" value="1"/>
</dbReference>
<dbReference type="PANTHER" id="PTHR43077:SF10">
    <property type="entry name" value="TRANSPORT PERMEASE PROTEIN"/>
    <property type="match status" value="1"/>
</dbReference>
<dbReference type="PANTHER" id="PTHR43077">
    <property type="entry name" value="TRANSPORT PERMEASE YVFS-RELATED"/>
    <property type="match status" value="1"/>
</dbReference>
<feature type="chain" id="PRO_0000087038" description="Type VII secretion system accessory factor EsaA">
    <location>
        <begin position="1"/>
        <end position="1009"/>
    </location>
</feature>
<feature type="transmembrane region" description="Helical" evidence="4">
    <location>
        <begin position="7"/>
        <end position="27"/>
    </location>
</feature>
<feature type="transmembrane region" description="Helical" evidence="4">
    <location>
        <begin position="822"/>
        <end position="842"/>
    </location>
</feature>
<feature type="transmembrane region" description="Helical" evidence="4">
    <location>
        <begin position="869"/>
        <end position="889"/>
    </location>
</feature>
<feature type="transmembrane region" description="Helical" evidence="4">
    <location>
        <begin position="903"/>
        <end position="923"/>
    </location>
</feature>
<feature type="transmembrane region" description="Helical" evidence="4">
    <location>
        <begin position="928"/>
        <end position="948"/>
    </location>
</feature>
<feature type="transmembrane region" description="Helical" evidence="4">
    <location>
        <begin position="979"/>
        <end position="999"/>
    </location>
</feature>
<name>ESAA_STAAN</name>
<gene>
    <name evidence="2" type="primary">esaA</name>
    <name type="ordered locus">SA0272</name>
</gene>
<sequence length="1009" mass="114782">MKKKNWIYALIVTLIIIIAIVSMIFFVQTKYGDQSEKGSQSVSNKNNKIHIAIVNEDQPTTYNGKKVELGQAFIKRLANEKNYKFETVTRNVAESGLKNGGYQVMIVIPENFSKLAMQLDAKTPSKISLQYKTAVGQKEEVAKNTEKVVSNVLNDFNKNLVEIYLTSIIDNLHNAQKNVGAIMTREHGVNSKFSNYLLNPINDFPELFTDTLVNSISANKDITKWFQTYNKSLLSANSDTFRVNTDYNVSTLIEKQNSLFDEHNTAMDKMLQDYKSQKDSVELDNYINALKQMDSQIDQQSSMQDTGKEEYKQTVKENLDKLREIIQSQESPFSKGMIEDYRKQLTESLQDELANNKDLQDALNSIKMNNAQFAENLEKQLHDDIVKEPDTDTTFIYNMSKQDFIAAGLNEGEANKYEAIVKEAKRYKNEYNLKKPLAEHINLTDYDNQVAQDTSSLINDGVKVQRTETIKSNDINQLTVATDPHFNFEGDIKINGKKYDIKDQSVQLDTSNKEYKVEVNGVAKLKKDAEKDFLKDKTMHLQLLFGQANRQDEPNDKKATSVVDVTLNHNLDGRLSKDALSQQLSALSRFDAHYKMYTDTKGREDKPFDNKRLIDMMVDQVINDMESFKDDKVAVLHQIDSMEENSDKLIDDILNNKKNTTKNKEDISKLIDQLENVKKTFAEEPQEPKIDKGKNDEFNTMSSNLDKEISRISEKSTQLLSDTQESKTIADSVSGQLNQLDNNVNKLHATGRALGVRANDLNRQMAKNDKDNELFAKEFKKVLQNSKDGDRQNQALKAFMSNPVQKKNLENVLANNGNTEVISPTLFVLLMYLLSMITAYIFYSYERAKGQMNFIKDDYSSKNHLWNNVITSGVIGTTGLVEGLIVGLIAMNKFHVLAGYRAKFILMVILTMMVFVLINTYLLRQVKSIGMFLMIAALGLYFVAMNNLKAAGQGVTNKISPLSYIDNMFFNYLNAEHPIGLALVILTVLVIIGFVLNMFIKHFKKERLI</sequence>
<evidence type="ECO:0000250" key="1">
    <source>
        <dbReference type="UniProtKB" id="A0A0H2XFP1"/>
    </source>
</evidence>
<evidence type="ECO:0000250" key="2">
    <source>
        <dbReference type="UniProtKB" id="P0C049"/>
    </source>
</evidence>
<evidence type="ECO:0000250" key="3">
    <source>
        <dbReference type="UniProtKB" id="Q2G188"/>
    </source>
</evidence>
<evidence type="ECO:0000255" key="4"/>
<evidence type="ECO:0000305" key="5"/>
<protein>
    <recommendedName>
        <fullName evidence="2">Type VII secretion system accessory factor EsaA</fullName>
    </recommendedName>
</protein>
<proteinExistence type="inferred from homology"/>
<comment type="function">
    <text evidence="1">Component of the type VII secretion system (Ess). Provides together with EssB and other components such as EssC and EssE a secretion platform across the cytoplasmic membrane in the host.</text>
</comment>
<comment type="subunit">
    <text evidence="1 3">Homodimer (By similarity). Interacts with EssB (By similarity).</text>
</comment>
<comment type="subcellular location">
    <subcellularLocation>
        <location evidence="3">Cell membrane</location>
        <topology evidence="4">Multi-pass membrane protein</topology>
    </subcellularLocation>
</comment>
<comment type="similarity">
    <text evidence="5">Belongs to the EsaA family.</text>
</comment>
<accession>Q7A7S3</accession>
<keyword id="KW-1003">Cell membrane</keyword>
<keyword id="KW-0472">Membrane</keyword>
<keyword id="KW-0812">Transmembrane</keyword>
<keyword id="KW-1133">Transmembrane helix</keyword>
<keyword id="KW-0843">Virulence</keyword>
<reference key="1">
    <citation type="journal article" date="2001" name="Lancet">
        <title>Whole genome sequencing of meticillin-resistant Staphylococcus aureus.</title>
        <authorList>
            <person name="Kuroda M."/>
            <person name="Ohta T."/>
            <person name="Uchiyama I."/>
            <person name="Baba T."/>
            <person name="Yuzawa H."/>
            <person name="Kobayashi I."/>
            <person name="Cui L."/>
            <person name="Oguchi A."/>
            <person name="Aoki K."/>
            <person name="Nagai Y."/>
            <person name="Lian J.-Q."/>
            <person name="Ito T."/>
            <person name="Kanamori M."/>
            <person name="Matsumaru H."/>
            <person name="Maruyama A."/>
            <person name="Murakami H."/>
            <person name="Hosoyama A."/>
            <person name="Mizutani-Ui Y."/>
            <person name="Takahashi N.K."/>
            <person name="Sawano T."/>
            <person name="Inoue R."/>
            <person name="Kaito C."/>
            <person name="Sekimizu K."/>
            <person name="Hirakawa H."/>
            <person name="Kuhara S."/>
            <person name="Goto S."/>
            <person name="Yabuzaki J."/>
            <person name="Kanehisa M."/>
            <person name="Yamashita A."/>
            <person name="Oshima K."/>
            <person name="Furuya K."/>
            <person name="Yoshino C."/>
            <person name="Shiba T."/>
            <person name="Hattori M."/>
            <person name="Ogasawara N."/>
            <person name="Hayashi H."/>
            <person name="Hiramatsu K."/>
        </authorList>
    </citation>
    <scope>NUCLEOTIDE SEQUENCE [LARGE SCALE GENOMIC DNA]</scope>
    <source>
        <strain>N315</strain>
    </source>
</reference>
<organism>
    <name type="scientific">Staphylococcus aureus (strain N315)</name>
    <dbReference type="NCBI Taxonomy" id="158879"/>
    <lineage>
        <taxon>Bacteria</taxon>
        <taxon>Bacillati</taxon>
        <taxon>Bacillota</taxon>
        <taxon>Bacilli</taxon>
        <taxon>Bacillales</taxon>
        <taxon>Staphylococcaceae</taxon>
        <taxon>Staphylococcus</taxon>
    </lineage>
</organism>